<name>NSP1_ROTBB</name>
<comment type="function">
    <text evidence="1">Plays a role in the inhibition of host innate immunity by inducing the degradation of key host factors required to activate interferon production such as IRF3, IRF5 or IRF7. Associates with components of cullin RING ligases (CRLs) including CUL1 or CUL3, which are essential multisubunit ubiquitination complexes, to modulate their activities.</text>
</comment>
<comment type="subunit">
    <text evidence="1">Interacts (via C-terminus) with host IRF3; this interaction leads to IRF3 degradation. Interacts with host IRF7; this interaction leads to IRF7 degradation. Interacts with host CUL1 and CUL3.</text>
</comment>
<comment type="subcellular location">
    <subcellularLocation>
        <location evidence="1">Host cytoplasm</location>
        <location evidence="1">Host cytoskeleton</location>
    </subcellularLocation>
</comment>
<comment type="domain">
    <text evidence="1">The integrity of the zinc-binding domain in NSP1 is important for degradation of host IRF3.</text>
</comment>
<comment type="domain">
    <text evidence="1">The pLxIS motif targets host IRF3 for degradation; however phosphorylation of NSP1 pLxIS motif is not required for its activity.</text>
</comment>
<comment type="similarity">
    <text evidence="1">Belongs to the rotavirus NSP1 family.</text>
</comment>
<dbReference type="EMBL" id="Z12105">
    <property type="protein sequence ID" value="CAA78090.1"/>
    <property type="molecule type" value="Genomic_RNA"/>
</dbReference>
<dbReference type="PIR" id="S31784">
    <property type="entry name" value="S31784"/>
</dbReference>
<dbReference type="GO" id="GO:0030430">
    <property type="term" value="C:host cell cytoplasm"/>
    <property type="evidence" value="ECO:0007669"/>
    <property type="project" value="UniProtKB-UniRule"/>
</dbReference>
<dbReference type="GO" id="GO:0044163">
    <property type="term" value="C:host cytoskeleton"/>
    <property type="evidence" value="ECO:0007669"/>
    <property type="project" value="UniProtKB-SubCell"/>
</dbReference>
<dbReference type="GO" id="GO:0046872">
    <property type="term" value="F:metal ion binding"/>
    <property type="evidence" value="ECO:0007669"/>
    <property type="project" value="UniProtKB-UniRule"/>
</dbReference>
<dbReference type="GO" id="GO:0003723">
    <property type="term" value="F:RNA binding"/>
    <property type="evidence" value="ECO:0007669"/>
    <property type="project" value="UniProtKB-UniRule"/>
</dbReference>
<dbReference type="GO" id="GO:0039548">
    <property type="term" value="P:symbiont-mediated suppression of host cytoplasmic pattern recognition receptor signaling pathway via inhibition of IRF3 activity"/>
    <property type="evidence" value="ECO:0007669"/>
    <property type="project" value="UniProtKB-UniRule"/>
</dbReference>
<dbReference type="GO" id="GO:0039557">
    <property type="term" value="P:symbiont-mediated suppression of host cytoplasmic pattern recognition receptor signaling pathway via inhibition of IRF7 activity"/>
    <property type="evidence" value="ECO:0007669"/>
    <property type="project" value="UniProtKB-UniRule"/>
</dbReference>
<dbReference type="HAMAP" id="MF_04088">
    <property type="entry name" value="ROTA_NSP1"/>
    <property type="match status" value="1"/>
</dbReference>
<dbReference type="InterPro" id="IPR002148">
    <property type="entry name" value="Rotavirus_NSP1"/>
</dbReference>
<dbReference type="Pfam" id="PF00981">
    <property type="entry name" value="Rota_NS53"/>
    <property type="match status" value="1"/>
</dbReference>
<feature type="chain" id="PRO_0000369069" description="Non-structural protein 1">
    <location>
        <begin position="1"/>
        <end position="491"/>
    </location>
</feature>
<feature type="region of interest" description="RNA-binding" evidence="1">
    <location>
        <begin position="1"/>
        <end position="81"/>
    </location>
</feature>
<feature type="region of interest" description="Zinc-binding domain" evidence="1">
    <location>
        <begin position="42"/>
        <end position="79"/>
    </location>
</feature>
<feature type="region of interest" description="Important for cytoskeleton localization" evidence="1">
    <location>
        <begin position="82"/>
        <end position="176"/>
    </location>
</feature>
<feature type="region of interest" description="Interaction with host IRF3" evidence="1">
    <location>
        <begin position="320"/>
        <end position="491"/>
    </location>
</feature>
<feature type="short sequence motif" description="pLxIS motif" evidence="1">
    <location>
        <begin position="485"/>
        <end position="488"/>
    </location>
</feature>
<organism>
    <name type="scientific">Rotavirus A (isolate RVA/Cow/United States/B223/1983/G10P8[11])</name>
    <name type="common">RV-A</name>
    <dbReference type="NCBI Taxonomy" id="1835656"/>
    <lineage>
        <taxon>Viruses</taxon>
        <taxon>Riboviria</taxon>
        <taxon>Orthornavirae</taxon>
        <taxon>Duplornaviricota</taxon>
        <taxon>Resentoviricetes</taxon>
        <taxon>Reovirales</taxon>
        <taxon>Sedoreoviridae</taxon>
        <taxon>Rotavirus</taxon>
        <taxon>Rotavirus A</taxon>
    </lineage>
</organism>
<protein>
    <recommendedName>
        <fullName evidence="1">Non-structural protein 1</fullName>
        <shortName evidence="1">NSP1</shortName>
    </recommendedName>
    <alternativeName>
        <fullName evidence="1">NCVP2</fullName>
    </alternativeName>
    <alternativeName>
        <fullName evidence="1">Non-structural RNA-binding protein 53</fullName>
        <shortName evidence="1">NS53</shortName>
    </alternativeName>
</protein>
<accession>Q65709</accession>
<evidence type="ECO:0000255" key="1">
    <source>
        <dbReference type="HAMAP-Rule" id="MF_04088"/>
    </source>
</evidence>
<sequence>MATFKDACYHYKKLNKLNGLVLKLGANDAWRPAPVAKYKGWCLDCCQHTDLTYCRGCALFHVCQWCSRYNRCFLDEEPHLLRMRTFRNEINKEDVEGLINMYNIIFPINERVVDKFINNVKQRKCRNELLIEWYNHLLLPITLQALSIELEGDVYYIFGYYDCMGKENQTPFHFVNMINRYDRLLLDDKNFDRMMHLPVALQQEYALRYFSKSRFISQIKREMNRHDFSDNLMEERDNPMSFMQVTRNCVSAHMNDNDWNERCKLIGDARNYMELMKSAYTEHYSISNRCKLFTIYKLNIISKLVKPNYIFSNHGLCALDVNNCKWCKIDNHYEIWNDFRLRKIYNNMMNFIRALVKSNTNVGHCSSHELVYKCISSVFIVWKIEKWNDSVRTLFEYLEPVEINHVEYVLLDHELSWEMSGVIMQIMNGKVPRILSFDDVKKIMGAIIYDWFDVRYMRETPVIVSTTNELRKLNKDNNLMDGYDYELSDIE</sequence>
<keyword id="KW-1035">Host cytoplasm</keyword>
<keyword id="KW-1037">Host cytoskeleton</keyword>
<keyword id="KW-0945">Host-virus interaction</keyword>
<keyword id="KW-1090">Inhibition of host innate immune response by virus</keyword>
<keyword id="KW-1092">Inhibition of host IRF3 by virus</keyword>
<keyword id="KW-1093">Inhibition of host IRF7 by virus</keyword>
<keyword id="KW-1113">Inhibition of host RLR pathway by virus</keyword>
<keyword id="KW-0922">Interferon antiviral system evasion</keyword>
<keyword id="KW-0479">Metal-binding</keyword>
<keyword id="KW-0694">RNA-binding</keyword>
<keyword id="KW-0899">Viral immunoevasion</keyword>
<proteinExistence type="inferred from homology"/>
<reference key="1">
    <citation type="journal article" date="1994" name="J. Gen. Virol.">
        <title>Molecular biology of rotaviruses. IX. Conservation and divergence in genome segment 5.</title>
        <authorList>
            <person name="Xu L.I."/>
            <person name="Tian Y."/>
            <person name="Tarlow O."/>
            <person name="Harbour D.A."/>
            <person name="McCrae M.A."/>
        </authorList>
    </citation>
    <scope>NUCLEOTIDE SEQUENCE [GENOMIC RNA]</scope>
</reference>
<organismHost>
    <name type="scientific">Bos taurus</name>
    <name type="common">Bovine</name>
    <dbReference type="NCBI Taxonomy" id="9913"/>
</organismHost>